<dbReference type="EMBL" id="AE014075">
    <property type="protein sequence ID" value="AAN83035.1"/>
    <property type="status" value="ALT_INIT"/>
    <property type="molecule type" value="Genomic_DNA"/>
</dbReference>
<dbReference type="RefSeq" id="WP_000703959.1">
    <property type="nucleotide sequence ID" value="NZ_CP051263.1"/>
</dbReference>
<dbReference type="SMR" id="P0ADM1"/>
<dbReference type="STRING" id="199310.c4600"/>
<dbReference type="KEGG" id="ecc:c4600"/>
<dbReference type="eggNOG" id="COG2149">
    <property type="taxonomic scope" value="Bacteria"/>
</dbReference>
<dbReference type="HOGENOM" id="CLU_053359_4_1_6"/>
<dbReference type="Proteomes" id="UP000001410">
    <property type="component" value="Chromosome"/>
</dbReference>
<dbReference type="GO" id="GO:0005886">
    <property type="term" value="C:plasma membrane"/>
    <property type="evidence" value="ECO:0007669"/>
    <property type="project" value="UniProtKB-SubCell"/>
</dbReference>
<dbReference type="InterPro" id="IPR003807">
    <property type="entry name" value="DUF202"/>
</dbReference>
<dbReference type="InterPro" id="IPR052053">
    <property type="entry name" value="IM_YidH-like"/>
</dbReference>
<dbReference type="PANTHER" id="PTHR34187:SF2">
    <property type="entry name" value="DUF202 DOMAIN-CONTAINING PROTEIN"/>
    <property type="match status" value="1"/>
</dbReference>
<dbReference type="PANTHER" id="PTHR34187">
    <property type="entry name" value="FGR18P"/>
    <property type="match status" value="1"/>
</dbReference>
<dbReference type="Pfam" id="PF02656">
    <property type="entry name" value="DUF202"/>
    <property type="match status" value="1"/>
</dbReference>
<feature type="chain" id="PRO_0000169630" description="Inner membrane protein YidH">
    <location>
        <begin position="1"/>
        <end position="115"/>
    </location>
</feature>
<feature type="topological domain" description="Cytoplasmic" evidence="2">
    <location>
        <begin position="1"/>
        <end position="30"/>
    </location>
</feature>
<feature type="transmembrane region" description="Helical" evidence="2">
    <location>
        <begin position="31"/>
        <end position="51"/>
    </location>
</feature>
<feature type="topological domain" description="Periplasmic" evidence="2">
    <location>
        <begin position="52"/>
        <end position="53"/>
    </location>
</feature>
<feature type="transmembrane region" description="Helical" evidence="2">
    <location>
        <begin position="54"/>
        <end position="74"/>
    </location>
</feature>
<feature type="topological domain" description="Cytoplasmic" evidence="2">
    <location>
        <begin position="75"/>
        <end position="92"/>
    </location>
</feature>
<feature type="transmembrane region" description="Helical" evidence="2">
    <location>
        <begin position="93"/>
        <end position="113"/>
    </location>
</feature>
<feature type="topological domain" description="Periplasmic" evidence="2">
    <location>
        <begin position="114"/>
        <end position="115"/>
    </location>
</feature>
<protein>
    <recommendedName>
        <fullName>Inner membrane protein YidH</fullName>
    </recommendedName>
</protein>
<comment type="subcellular location">
    <subcellularLocation>
        <location evidence="1">Cell inner membrane</location>
        <topology evidence="1">Multi-pass membrane protein</topology>
    </subcellularLocation>
</comment>
<comment type="similarity">
    <text evidence="3">To M.tuberculosis Rv2272.</text>
</comment>
<comment type="sequence caution" evidence="3">
    <conflict type="erroneous initiation">
        <sequence resource="EMBL-CDS" id="AAN83035"/>
    </conflict>
</comment>
<sequence>MKISRLGEAPDYRFSLANERTFLAWIRTALGFLAAGVGLDQLAPDFATPVIRELLALLLCLFSGGLAMYGYLRWLRNEKAMRLKEDLPYTNSLLIISLILMVVAVIVMGLVLYAG</sequence>
<keyword id="KW-0997">Cell inner membrane</keyword>
<keyword id="KW-1003">Cell membrane</keyword>
<keyword id="KW-0472">Membrane</keyword>
<keyword id="KW-1185">Reference proteome</keyword>
<keyword id="KW-0812">Transmembrane</keyword>
<keyword id="KW-1133">Transmembrane helix</keyword>
<name>YIDH_ECOL6</name>
<proteinExistence type="inferred from homology"/>
<evidence type="ECO:0000250" key="1"/>
<evidence type="ECO:0000255" key="2"/>
<evidence type="ECO:0000305" key="3"/>
<gene>
    <name type="primary">yidH</name>
    <name type="ordered locus">c4600</name>
</gene>
<reference key="1">
    <citation type="journal article" date="2002" name="Proc. Natl. Acad. Sci. U.S.A.">
        <title>Extensive mosaic structure revealed by the complete genome sequence of uropathogenic Escherichia coli.</title>
        <authorList>
            <person name="Welch R.A."/>
            <person name="Burland V."/>
            <person name="Plunkett G. III"/>
            <person name="Redford P."/>
            <person name="Roesch P."/>
            <person name="Rasko D."/>
            <person name="Buckles E.L."/>
            <person name="Liou S.-R."/>
            <person name="Boutin A."/>
            <person name="Hackett J."/>
            <person name="Stroud D."/>
            <person name="Mayhew G.F."/>
            <person name="Rose D.J."/>
            <person name="Zhou S."/>
            <person name="Schwartz D.C."/>
            <person name="Perna N.T."/>
            <person name="Mobley H.L.T."/>
            <person name="Donnenberg M.S."/>
            <person name="Blattner F.R."/>
        </authorList>
    </citation>
    <scope>NUCLEOTIDE SEQUENCE [LARGE SCALE GENOMIC DNA]</scope>
    <source>
        <strain>CFT073 / ATCC 700928 / UPEC</strain>
    </source>
</reference>
<accession>P0ADM1</accession>
<accession>P31445</accession>
<organism>
    <name type="scientific">Escherichia coli O6:H1 (strain CFT073 / ATCC 700928 / UPEC)</name>
    <dbReference type="NCBI Taxonomy" id="199310"/>
    <lineage>
        <taxon>Bacteria</taxon>
        <taxon>Pseudomonadati</taxon>
        <taxon>Pseudomonadota</taxon>
        <taxon>Gammaproteobacteria</taxon>
        <taxon>Enterobacterales</taxon>
        <taxon>Enterobacteriaceae</taxon>
        <taxon>Escherichia</taxon>
    </lineage>
</organism>